<accession>C3KBZ0</accession>
<organism>
    <name type="scientific">Pseudomonas fluorescens (strain SBW25)</name>
    <dbReference type="NCBI Taxonomy" id="216595"/>
    <lineage>
        <taxon>Bacteria</taxon>
        <taxon>Pseudomonadati</taxon>
        <taxon>Pseudomonadota</taxon>
        <taxon>Gammaproteobacteria</taxon>
        <taxon>Pseudomonadales</taxon>
        <taxon>Pseudomonadaceae</taxon>
        <taxon>Pseudomonas</taxon>
    </lineage>
</organism>
<name>PYRC_PSEFS</name>
<reference key="1">
    <citation type="journal article" date="2009" name="Genome Biol.">
        <title>Genomic and genetic analyses of diversity and plant interactions of Pseudomonas fluorescens.</title>
        <authorList>
            <person name="Silby M.W."/>
            <person name="Cerdeno-Tarraga A.M."/>
            <person name="Vernikos G.S."/>
            <person name="Giddens S.R."/>
            <person name="Jackson R.W."/>
            <person name="Preston G.M."/>
            <person name="Zhang X.-X."/>
            <person name="Moon C.D."/>
            <person name="Gehrig S.M."/>
            <person name="Godfrey S.A.C."/>
            <person name="Knight C.G."/>
            <person name="Malone J.G."/>
            <person name="Robinson Z."/>
            <person name="Spiers A.J."/>
            <person name="Harris S."/>
            <person name="Challis G.L."/>
            <person name="Yaxley A.M."/>
            <person name="Harris D."/>
            <person name="Seeger K."/>
            <person name="Murphy L."/>
            <person name="Rutter S."/>
            <person name="Squares R."/>
            <person name="Quail M.A."/>
            <person name="Saunders E."/>
            <person name="Mavromatis K."/>
            <person name="Brettin T.S."/>
            <person name="Bentley S.D."/>
            <person name="Hothersall J."/>
            <person name="Stephens E."/>
            <person name="Thomas C.M."/>
            <person name="Parkhill J."/>
            <person name="Levy S.B."/>
            <person name="Rainey P.B."/>
            <person name="Thomson N.R."/>
        </authorList>
    </citation>
    <scope>NUCLEOTIDE SEQUENCE [LARGE SCALE GENOMIC DNA]</scope>
    <source>
        <strain>SBW25</strain>
    </source>
</reference>
<protein>
    <recommendedName>
        <fullName evidence="1">Dihydroorotase</fullName>
        <shortName evidence="1">DHOase</shortName>
        <ecNumber evidence="1">3.5.2.3</ecNumber>
    </recommendedName>
</protein>
<keyword id="KW-0378">Hydrolase</keyword>
<keyword id="KW-0479">Metal-binding</keyword>
<keyword id="KW-0665">Pyrimidine biosynthesis</keyword>
<keyword id="KW-0862">Zinc</keyword>
<dbReference type="EC" id="3.5.2.3" evidence="1"/>
<dbReference type="EMBL" id="AM181176">
    <property type="protein sequence ID" value="CAY47416.1"/>
    <property type="molecule type" value="Genomic_DNA"/>
</dbReference>
<dbReference type="RefSeq" id="WP_012722488.1">
    <property type="nucleotide sequence ID" value="NC_012660.1"/>
</dbReference>
<dbReference type="SMR" id="C3KBZ0"/>
<dbReference type="STRING" id="294.SRM1_04454"/>
<dbReference type="PATRIC" id="fig|216595.4.peg.1388"/>
<dbReference type="eggNOG" id="COG0418">
    <property type="taxonomic scope" value="Bacteria"/>
</dbReference>
<dbReference type="HOGENOM" id="CLU_041558_1_0_6"/>
<dbReference type="OrthoDB" id="9808095at2"/>
<dbReference type="UniPathway" id="UPA00070">
    <property type="reaction ID" value="UER00117"/>
</dbReference>
<dbReference type="GO" id="GO:0005829">
    <property type="term" value="C:cytosol"/>
    <property type="evidence" value="ECO:0007669"/>
    <property type="project" value="TreeGrafter"/>
</dbReference>
<dbReference type="GO" id="GO:0004151">
    <property type="term" value="F:dihydroorotase activity"/>
    <property type="evidence" value="ECO:0007669"/>
    <property type="project" value="UniProtKB-UniRule"/>
</dbReference>
<dbReference type="GO" id="GO:0008270">
    <property type="term" value="F:zinc ion binding"/>
    <property type="evidence" value="ECO:0007669"/>
    <property type="project" value="UniProtKB-UniRule"/>
</dbReference>
<dbReference type="GO" id="GO:0006207">
    <property type="term" value="P:'de novo' pyrimidine nucleobase biosynthetic process"/>
    <property type="evidence" value="ECO:0007669"/>
    <property type="project" value="TreeGrafter"/>
</dbReference>
<dbReference type="GO" id="GO:0044205">
    <property type="term" value="P:'de novo' UMP biosynthetic process"/>
    <property type="evidence" value="ECO:0007669"/>
    <property type="project" value="UniProtKB-UniRule"/>
</dbReference>
<dbReference type="CDD" id="cd01294">
    <property type="entry name" value="DHOase"/>
    <property type="match status" value="1"/>
</dbReference>
<dbReference type="FunFam" id="3.20.20.140:FF:000006">
    <property type="entry name" value="Dihydroorotase"/>
    <property type="match status" value="1"/>
</dbReference>
<dbReference type="Gene3D" id="3.20.20.140">
    <property type="entry name" value="Metal-dependent hydrolases"/>
    <property type="match status" value="1"/>
</dbReference>
<dbReference type="HAMAP" id="MF_00219">
    <property type="entry name" value="PyrC_classII"/>
    <property type="match status" value="1"/>
</dbReference>
<dbReference type="InterPro" id="IPR006680">
    <property type="entry name" value="Amidohydro-rel"/>
</dbReference>
<dbReference type="InterPro" id="IPR004721">
    <property type="entry name" value="DHOdimr"/>
</dbReference>
<dbReference type="InterPro" id="IPR002195">
    <property type="entry name" value="Dihydroorotase_CS"/>
</dbReference>
<dbReference type="InterPro" id="IPR032466">
    <property type="entry name" value="Metal_Hydrolase"/>
</dbReference>
<dbReference type="NCBIfam" id="TIGR00856">
    <property type="entry name" value="pyrC_dimer"/>
    <property type="match status" value="1"/>
</dbReference>
<dbReference type="PANTHER" id="PTHR43137">
    <property type="entry name" value="DIHYDROOROTASE"/>
    <property type="match status" value="1"/>
</dbReference>
<dbReference type="PANTHER" id="PTHR43137:SF1">
    <property type="entry name" value="DIHYDROOROTASE"/>
    <property type="match status" value="1"/>
</dbReference>
<dbReference type="Pfam" id="PF01979">
    <property type="entry name" value="Amidohydro_1"/>
    <property type="match status" value="1"/>
</dbReference>
<dbReference type="PIRSF" id="PIRSF001237">
    <property type="entry name" value="DHOdimr"/>
    <property type="match status" value="1"/>
</dbReference>
<dbReference type="SUPFAM" id="SSF51556">
    <property type="entry name" value="Metallo-dependent hydrolases"/>
    <property type="match status" value="1"/>
</dbReference>
<dbReference type="PROSITE" id="PS00482">
    <property type="entry name" value="DIHYDROOROTASE_1"/>
    <property type="match status" value="1"/>
</dbReference>
<dbReference type="PROSITE" id="PS00483">
    <property type="entry name" value="DIHYDROOROTASE_2"/>
    <property type="match status" value="1"/>
</dbReference>
<evidence type="ECO:0000255" key="1">
    <source>
        <dbReference type="HAMAP-Rule" id="MF_00219"/>
    </source>
</evidence>
<gene>
    <name evidence="1" type="primary">pyrC</name>
    <name type="ordered locus">PFLU_1154</name>
</gene>
<sequence length="348" mass="38409">MSDRLTLLRPDDWHIHLRDGAALPHTVADVARTFGRAIIMPNLVPPVRNAEQADAYRQRILAARPAGSRFEPLMVLYLTDRTQPEEIREAKASGFVHAAKLYPAGATTNSDSGVTSIDKILPAIEAMAEVGMPLLIHGEVTRGDVDVFDREKIFIDEHMRRVVELFPTLKVVFEHITTADAVQFVTEASANVGATITAHHLLYNRNHMLVGGIRPHFYCLPILKRNTHQVALLDAATSGNPKFFLGTDSAPHAQHAKEAACGCAGCYTAFAAIELYAEAFEQRNALDKLEGFASINGPRFYGLPANTDRITLVREDWTAPASLPFGELTVIPLRAGETLRWRLLEESK</sequence>
<feature type="chain" id="PRO_1000204248" description="Dihydroorotase">
    <location>
        <begin position="1"/>
        <end position="348"/>
    </location>
</feature>
<feature type="active site" evidence="1">
    <location>
        <position position="248"/>
    </location>
</feature>
<feature type="binding site" evidence="1">
    <location>
        <position position="14"/>
    </location>
    <ligand>
        <name>Zn(2+)</name>
        <dbReference type="ChEBI" id="CHEBI:29105"/>
        <label>1</label>
    </ligand>
</feature>
<feature type="binding site" evidence="1">
    <location>
        <begin position="16"/>
        <end position="18"/>
    </location>
    <ligand>
        <name>substrate</name>
    </ligand>
</feature>
<feature type="binding site" evidence="1">
    <location>
        <position position="16"/>
    </location>
    <ligand>
        <name>Zn(2+)</name>
        <dbReference type="ChEBI" id="CHEBI:29105"/>
        <label>1</label>
    </ligand>
</feature>
<feature type="binding site" evidence="1">
    <location>
        <position position="42"/>
    </location>
    <ligand>
        <name>substrate</name>
    </ligand>
</feature>
<feature type="binding site" description="via carbamate group" evidence="1">
    <location>
        <position position="100"/>
    </location>
    <ligand>
        <name>Zn(2+)</name>
        <dbReference type="ChEBI" id="CHEBI:29105"/>
        <label>1</label>
    </ligand>
</feature>
<feature type="binding site" description="via carbamate group" evidence="1">
    <location>
        <position position="100"/>
    </location>
    <ligand>
        <name>Zn(2+)</name>
        <dbReference type="ChEBI" id="CHEBI:29105"/>
        <label>2</label>
    </ligand>
</feature>
<feature type="binding site" evidence="1">
    <location>
        <position position="137"/>
    </location>
    <ligand>
        <name>substrate</name>
    </ligand>
</feature>
<feature type="binding site" evidence="1">
    <location>
        <position position="137"/>
    </location>
    <ligand>
        <name>Zn(2+)</name>
        <dbReference type="ChEBI" id="CHEBI:29105"/>
        <label>2</label>
    </ligand>
</feature>
<feature type="binding site" evidence="1">
    <location>
        <position position="175"/>
    </location>
    <ligand>
        <name>Zn(2+)</name>
        <dbReference type="ChEBI" id="CHEBI:29105"/>
        <label>2</label>
    </ligand>
</feature>
<feature type="binding site" evidence="1">
    <location>
        <position position="220"/>
    </location>
    <ligand>
        <name>substrate</name>
    </ligand>
</feature>
<feature type="binding site" evidence="1">
    <location>
        <position position="248"/>
    </location>
    <ligand>
        <name>Zn(2+)</name>
        <dbReference type="ChEBI" id="CHEBI:29105"/>
        <label>1</label>
    </ligand>
</feature>
<feature type="binding site" evidence="1">
    <location>
        <position position="252"/>
    </location>
    <ligand>
        <name>substrate</name>
    </ligand>
</feature>
<feature type="binding site" evidence="1">
    <location>
        <position position="264"/>
    </location>
    <ligand>
        <name>substrate</name>
    </ligand>
</feature>
<feature type="modified residue" description="N6-carboxylysine" evidence="1">
    <location>
        <position position="100"/>
    </location>
</feature>
<proteinExistence type="inferred from homology"/>
<comment type="function">
    <text evidence="1">Catalyzes the reversible cyclization of carbamoyl aspartate to dihydroorotate.</text>
</comment>
<comment type="catalytic activity">
    <reaction evidence="1">
        <text>(S)-dihydroorotate + H2O = N-carbamoyl-L-aspartate + H(+)</text>
        <dbReference type="Rhea" id="RHEA:24296"/>
        <dbReference type="ChEBI" id="CHEBI:15377"/>
        <dbReference type="ChEBI" id="CHEBI:15378"/>
        <dbReference type="ChEBI" id="CHEBI:30864"/>
        <dbReference type="ChEBI" id="CHEBI:32814"/>
        <dbReference type="EC" id="3.5.2.3"/>
    </reaction>
</comment>
<comment type="cofactor">
    <cofactor evidence="1">
        <name>Zn(2+)</name>
        <dbReference type="ChEBI" id="CHEBI:29105"/>
    </cofactor>
    <text evidence="1">Binds 2 Zn(2+) ions per subunit.</text>
</comment>
<comment type="pathway">
    <text evidence="1">Pyrimidine metabolism; UMP biosynthesis via de novo pathway; (S)-dihydroorotate from bicarbonate: step 3/3.</text>
</comment>
<comment type="subunit">
    <text evidence="1">Homodimer.</text>
</comment>
<comment type="similarity">
    <text evidence="1">Belongs to the metallo-dependent hydrolases superfamily. DHOase family. Class II DHOase subfamily.</text>
</comment>